<comment type="function">
    <text evidence="1">Receptor for a number of inflammatory CC-chemokines including CCL3/MIP-1-alpha, CCL4/MIP-1-beta and RANTES and subsequently transduces a signal by increasing the intracellular calcium ion level. May play a role in the control of granulocytic lineage proliferation or differentiation. Participates in T-lymphocyte migration to the infection site by acting as a chemotactic receptor.</text>
</comment>
<comment type="subunit">
    <text evidence="1">Interacts with PRAF2. Efficient ligand binding to CCL3/MIP-1alpha and CCL4/MIP-1beta requires sulfation, O-glycosylation and sialic acid modifications. Glycosylation on Ser-6 is required for efficient binding of CCL4. Interacts with GRK2. Interacts with ARRB1 and ARRB2. Interacts with CNIH4. Interacts with S100A4; this interaction stimulates T-lymphocyte chemotaxis.</text>
</comment>
<comment type="subcellular location">
    <subcellularLocation>
        <location evidence="2">Cell membrane</location>
        <topology evidence="2">Multi-pass membrane protein</topology>
    </subcellularLocation>
</comment>
<comment type="PTM">
    <text evidence="1">Sulfated on at least 2 of the N-terminal tyrosines. Sulfation is required for efficient binding of the chemokines, CCL3 and CCL4 (By similarity).</text>
</comment>
<comment type="PTM">
    <text evidence="1">Palmitoylation in the C-terminal is important for cell surface expression.</text>
</comment>
<comment type="PTM">
    <text evidence="1">Phosphorylation on serine residues in the C-terminal is stimulated by binding CC chemokines especially by APO-RANTES.</text>
</comment>
<comment type="PTM">
    <text evidence="1">O-glycosylated, but not N-glycosylated. Ser-6 appears to be the major site even if Ser-7 may be also O-glycosylated. Also sialylated glycans present which contribute to chemokine binding. Thr-16 and Ser-17 may also be glycosylated and, if so, with small moieties such as a T-antigen.</text>
</comment>
<comment type="similarity">
    <text evidence="4">Belongs to the G-protein coupled receptor 1 family.</text>
</comment>
<keyword id="KW-1003">Cell membrane</keyword>
<keyword id="KW-1015">Disulfide bond</keyword>
<keyword id="KW-0297">G-protein coupled receptor</keyword>
<keyword id="KW-0325">Glycoprotein</keyword>
<keyword id="KW-0449">Lipoprotein</keyword>
<keyword id="KW-0472">Membrane</keyword>
<keyword id="KW-0564">Palmitate</keyword>
<keyword id="KW-0597">Phosphoprotein</keyword>
<keyword id="KW-0675">Receptor</keyword>
<keyword id="KW-1185">Reference proteome</keyword>
<keyword id="KW-0765">Sulfation</keyword>
<keyword id="KW-0807">Transducer</keyword>
<keyword id="KW-0812">Transmembrane</keyword>
<keyword id="KW-1133">Transmembrane helix</keyword>
<protein>
    <recommendedName>
        <fullName>C-C chemokine receptor type 5</fullName>
        <shortName>C-C CKR-5</shortName>
        <shortName>CC-CKR-5</shortName>
        <shortName>CCR-5</shortName>
        <shortName>CCR5</shortName>
    </recommendedName>
    <cdAntigenName>CD195</cdAntigenName>
</protein>
<proteinExistence type="inferred from homology"/>
<organism>
    <name type="scientific">Chlorocebus sabaeus</name>
    <name type="common">Green monkey</name>
    <name type="synonym">Simia sabaea</name>
    <dbReference type="NCBI Taxonomy" id="60711"/>
    <lineage>
        <taxon>Eukaryota</taxon>
        <taxon>Metazoa</taxon>
        <taxon>Chordata</taxon>
        <taxon>Craniata</taxon>
        <taxon>Vertebrata</taxon>
        <taxon>Euteleostomi</taxon>
        <taxon>Mammalia</taxon>
        <taxon>Eutheria</taxon>
        <taxon>Euarchontoglires</taxon>
        <taxon>Primates</taxon>
        <taxon>Haplorrhini</taxon>
        <taxon>Catarrhini</taxon>
        <taxon>Cercopithecidae</taxon>
        <taxon>Cercopithecinae</taxon>
        <taxon>Chlorocebus</taxon>
    </lineage>
</organism>
<evidence type="ECO:0000250" key="1">
    <source>
        <dbReference type="UniProtKB" id="P51681"/>
    </source>
</evidence>
<evidence type="ECO:0000250" key="2">
    <source>
        <dbReference type="UniProtKB" id="Q9XT76"/>
    </source>
</evidence>
<evidence type="ECO:0000255" key="3"/>
<evidence type="ECO:0000255" key="4">
    <source>
        <dbReference type="PROSITE-ProRule" id="PRU00521"/>
    </source>
</evidence>
<evidence type="ECO:0000305" key="5"/>
<name>CCR5_CHLSB</name>
<sequence length="352" mass="40562">MDYQVSSPTYDIDYYTSEPCQKIKVKQIAARLLPPLYSLVFIFGFVGNILVVLILINCKRLKSMTDIYLLNLAISDLLFLLTVPFWAHYAAAQWDFGNTMCQLLTGLYFIGFFSGIFFIILLTIDRYLAIVHAVFALKARTVTFGVVTSVITWVVAVFASLPRIIFTRSQREGLHYTCSSHFPYSQYQFWKNFQTLKIVILGLVLPLLVMVICYSGILKTLLRCRNDKKRHRAVRLIFTIMIVYFLFWAPYNIVLLLNTFQEFFGLNNCSSSNRLDQAMQVTETLGMTHCCINPIIYAFVGEKFRNYLLVFFQKHIAKRFCKCCSIFQQDAPERASSVYTRSTGEQETSVGL</sequence>
<feature type="chain" id="PRO_0000254902" description="C-C chemokine receptor type 5">
    <location>
        <begin position="1"/>
        <end position="352"/>
    </location>
</feature>
<feature type="topological domain" description="Extracellular" evidence="3">
    <location>
        <begin position="1"/>
        <end position="30"/>
    </location>
</feature>
<feature type="transmembrane region" description="Helical; Name=1" evidence="3">
    <location>
        <begin position="31"/>
        <end position="58"/>
    </location>
</feature>
<feature type="topological domain" description="Cytoplasmic" evidence="3">
    <location>
        <begin position="59"/>
        <end position="68"/>
    </location>
</feature>
<feature type="transmembrane region" description="Helical; Name=2" evidence="3">
    <location>
        <begin position="69"/>
        <end position="89"/>
    </location>
</feature>
<feature type="topological domain" description="Extracellular" evidence="3">
    <location>
        <begin position="90"/>
        <end position="102"/>
    </location>
</feature>
<feature type="transmembrane region" description="Helical; Name=3" evidence="3">
    <location>
        <begin position="103"/>
        <end position="124"/>
    </location>
</feature>
<feature type="topological domain" description="Cytoplasmic" evidence="3">
    <location>
        <begin position="125"/>
        <end position="141"/>
    </location>
</feature>
<feature type="transmembrane region" description="Helical; Name=4" evidence="3">
    <location>
        <begin position="142"/>
        <end position="166"/>
    </location>
</feature>
<feature type="topological domain" description="Extracellular" evidence="3">
    <location>
        <begin position="167"/>
        <end position="198"/>
    </location>
</feature>
<feature type="transmembrane region" description="Helical; Name=5" evidence="3">
    <location>
        <begin position="199"/>
        <end position="218"/>
    </location>
</feature>
<feature type="topological domain" description="Cytoplasmic" evidence="3">
    <location>
        <begin position="219"/>
        <end position="235"/>
    </location>
</feature>
<feature type="transmembrane region" description="Helical; Name=6" evidence="3">
    <location>
        <begin position="236"/>
        <end position="260"/>
    </location>
</feature>
<feature type="topological domain" description="Extracellular" evidence="3">
    <location>
        <begin position="261"/>
        <end position="277"/>
    </location>
</feature>
<feature type="transmembrane region" description="Helical; Name=7" evidence="3">
    <location>
        <begin position="278"/>
        <end position="301"/>
    </location>
</feature>
<feature type="topological domain" description="Cytoplasmic" evidence="3">
    <location>
        <begin position="302"/>
        <end position="352"/>
    </location>
</feature>
<feature type="modified residue" description="Sulfotyrosine" evidence="1">
    <location>
        <position position="3"/>
    </location>
</feature>
<feature type="modified residue" description="Sulfotyrosine" evidence="3">
    <location>
        <position position="10"/>
    </location>
</feature>
<feature type="modified residue" description="Sulfotyrosine" evidence="3">
    <location>
        <position position="14"/>
    </location>
</feature>
<feature type="modified residue" description="Sulfotyrosine" evidence="3">
    <location>
        <position position="15"/>
    </location>
</feature>
<feature type="modified residue" description="Phosphoserine; by BARK1" evidence="1">
    <location>
        <position position="336"/>
    </location>
</feature>
<feature type="modified residue" description="Phosphoserine; by BARK1" evidence="1">
    <location>
        <position position="337"/>
    </location>
</feature>
<feature type="modified residue" description="Phosphoserine; by BARK1" evidence="1">
    <location>
        <position position="342"/>
    </location>
</feature>
<feature type="modified residue" description="Phosphoserine; by BARK1" evidence="1">
    <location>
        <position position="349"/>
    </location>
</feature>
<feature type="lipid moiety-binding region" description="S-palmitoyl cysteine" evidence="1">
    <location>
        <position position="321"/>
    </location>
</feature>
<feature type="lipid moiety-binding region" description="S-palmitoyl cysteine" evidence="1">
    <location>
        <position position="323"/>
    </location>
</feature>
<feature type="lipid moiety-binding region" description="S-palmitoyl cysteine" evidence="1">
    <location>
        <position position="324"/>
    </location>
</feature>
<feature type="glycosylation site" description="O-linked (GalNAc...) serine" evidence="1">
    <location>
        <position position="6"/>
    </location>
</feature>
<feature type="glycosylation site" description="O-linked (GalNAc...) serine" evidence="1">
    <location>
        <position position="7"/>
    </location>
</feature>
<feature type="disulfide bond" evidence="1">
    <location>
        <begin position="20"/>
        <end position="269"/>
    </location>
</feature>
<feature type="disulfide bond" evidence="4">
    <location>
        <begin position="101"/>
        <end position="178"/>
    </location>
</feature>
<feature type="sequence conflict" description="In Ref. 2; AAF87982." evidence="5" ref="2">
    <original>K</original>
    <variation>N</variation>
    <location>
        <position position="24"/>
    </location>
</feature>
<feature type="sequence conflict" description="In Ref. 2; AAF87982." evidence="5" ref="2">
    <original>P</original>
    <variation>Q</variation>
    <location>
        <position position="206"/>
    </location>
</feature>
<feature type="sequence conflict" description="In Ref. 2; AAF87982." evidence="5" ref="2">
    <original>DK</original>
    <variation>EE</variation>
    <location>
        <begin position="227"/>
        <end position="228"/>
    </location>
</feature>
<feature type="sequence conflict" description="In Ref. 2; AAF87982." evidence="5" ref="2">
    <original>Y</original>
    <variation>H</variation>
    <location>
        <position position="251"/>
    </location>
</feature>
<feature type="sequence conflict" description="In Ref. 2; AAF87982." evidence="5" ref="2">
    <original>D</original>
    <variation>E</variation>
    <location>
        <position position="330"/>
    </location>
</feature>
<accession>Q9TV43</accession>
<accession>Q9MZA2</accession>
<reference key="1">
    <citation type="journal article" date="1999" name="AIDS Res. Hum. Retroviruses">
        <title>Mutations in CCR5-coding sequences are not associated with SIV carrier status in African nonhuman primates.</title>
        <authorList>
            <person name="Mueller-Trutwin M.-C."/>
            <person name="Corbet S."/>
            <person name="Hansen J."/>
            <person name="Georges-Courbot M.-C."/>
            <person name="Diop O."/>
            <person name="Rigoulet J."/>
            <person name="Barre-Sinoussi F."/>
            <person name="Fomsgaard A."/>
        </authorList>
    </citation>
    <scope>NUCLEOTIDE SEQUENCE [GENOMIC DNA]</scope>
</reference>
<reference key="2">
    <citation type="journal article" date="2000" name="J. Biol. Chem.">
        <title>Evolution of human and non-human primate CC chemokine receptor 5 gene and mRNA. Potential roles for haplotype and mRNA diversity, differential haplotype-specific transcriptional activity, and altered transcription factor binding to polymorphic nucleotides in the pathogenesis of HIV-1 and simian immunodeficiency virus.</title>
        <authorList>
            <person name="Mummidi S."/>
            <person name="Bamshad M."/>
            <person name="Ahuja S.S."/>
            <person name="Gonzalez E."/>
            <person name="Feuillet P.M."/>
            <person name="Begum K."/>
            <person name="Galvis M.C."/>
            <person name="Kostecki V."/>
            <person name="Valente A.J."/>
            <person name="Murthy K.K."/>
            <person name="Haro L."/>
            <person name="Dolan M.J."/>
            <person name="Allan J.S."/>
            <person name="Ahuja S.K."/>
        </authorList>
    </citation>
    <scope>NUCLEOTIDE SEQUENCE [GENOMIC DNA]</scope>
</reference>
<gene>
    <name type="primary">CCR5</name>
    <name type="synonym">CMKBR5</name>
</gene>
<dbReference type="EMBL" id="AF035221">
    <property type="protein sequence ID" value="AAD44014.1"/>
    <property type="molecule type" value="Genomic_DNA"/>
</dbReference>
<dbReference type="EMBL" id="AF252552">
    <property type="protein sequence ID" value="AAF87982.1"/>
    <property type="molecule type" value="Genomic_DNA"/>
</dbReference>
<dbReference type="SMR" id="Q9TV43"/>
<dbReference type="STRING" id="60711.ENSCSAP00000018297"/>
<dbReference type="GlyCosmos" id="Q9TV43">
    <property type="glycosylation" value="2 sites, No reported glycans"/>
</dbReference>
<dbReference type="eggNOG" id="KOG3656">
    <property type="taxonomic scope" value="Eukaryota"/>
</dbReference>
<dbReference type="Proteomes" id="UP000029965">
    <property type="component" value="Unplaced"/>
</dbReference>
<dbReference type="GO" id="GO:0005737">
    <property type="term" value="C:cytoplasm"/>
    <property type="evidence" value="ECO:0007669"/>
    <property type="project" value="TreeGrafter"/>
</dbReference>
<dbReference type="GO" id="GO:0009897">
    <property type="term" value="C:external side of plasma membrane"/>
    <property type="evidence" value="ECO:0000250"/>
    <property type="project" value="UniProtKB"/>
</dbReference>
<dbReference type="GO" id="GO:0016493">
    <property type="term" value="F:C-C chemokine receptor activity"/>
    <property type="evidence" value="ECO:0000250"/>
    <property type="project" value="UniProtKB"/>
</dbReference>
<dbReference type="GO" id="GO:0071791">
    <property type="term" value="F:chemokine (C-C motif) ligand 5 binding"/>
    <property type="evidence" value="ECO:0007669"/>
    <property type="project" value="TreeGrafter"/>
</dbReference>
<dbReference type="GO" id="GO:0019722">
    <property type="term" value="P:calcium-mediated signaling"/>
    <property type="evidence" value="ECO:0007669"/>
    <property type="project" value="TreeGrafter"/>
</dbReference>
<dbReference type="GO" id="GO:0060326">
    <property type="term" value="P:cell chemotaxis"/>
    <property type="evidence" value="ECO:0007669"/>
    <property type="project" value="TreeGrafter"/>
</dbReference>
<dbReference type="GO" id="GO:0006955">
    <property type="term" value="P:immune response"/>
    <property type="evidence" value="ECO:0007669"/>
    <property type="project" value="InterPro"/>
</dbReference>
<dbReference type="GO" id="GO:0006954">
    <property type="term" value="P:inflammatory response"/>
    <property type="evidence" value="ECO:0007669"/>
    <property type="project" value="InterPro"/>
</dbReference>
<dbReference type="GO" id="GO:0007204">
    <property type="term" value="P:positive regulation of cytosolic calcium ion concentration"/>
    <property type="evidence" value="ECO:0007669"/>
    <property type="project" value="TreeGrafter"/>
</dbReference>
<dbReference type="CDD" id="cd15184">
    <property type="entry name" value="7tmA_CCR5_CCR2"/>
    <property type="match status" value="1"/>
</dbReference>
<dbReference type="FunFam" id="1.20.1070.10:FF:000026">
    <property type="entry name" value="C-C chemokine receptor type 5"/>
    <property type="match status" value="1"/>
</dbReference>
<dbReference type="Gene3D" id="1.20.1070.10">
    <property type="entry name" value="Rhodopsin 7-helix transmembrane proteins"/>
    <property type="match status" value="1"/>
</dbReference>
<dbReference type="InterPro" id="IPR050119">
    <property type="entry name" value="CCR1-9-like"/>
</dbReference>
<dbReference type="InterPro" id="IPR002240">
    <property type="entry name" value="Chemokine_CCR5"/>
</dbReference>
<dbReference type="InterPro" id="IPR000355">
    <property type="entry name" value="Chemokine_rcpt"/>
</dbReference>
<dbReference type="InterPro" id="IPR000276">
    <property type="entry name" value="GPCR_Rhodpsn"/>
</dbReference>
<dbReference type="InterPro" id="IPR017452">
    <property type="entry name" value="GPCR_Rhodpsn_7TM"/>
</dbReference>
<dbReference type="PANTHER" id="PTHR10489:SF686">
    <property type="entry name" value="C-C CHEMOKINE RECEPTOR TYPE 5"/>
    <property type="match status" value="1"/>
</dbReference>
<dbReference type="PANTHER" id="PTHR10489">
    <property type="entry name" value="CELL ADHESION MOLECULE"/>
    <property type="match status" value="1"/>
</dbReference>
<dbReference type="Pfam" id="PF00001">
    <property type="entry name" value="7tm_1"/>
    <property type="match status" value="1"/>
</dbReference>
<dbReference type="PRINTS" id="PR00657">
    <property type="entry name" value="CCCHEMOKINER"/>
</dbReference>
<dbReference type="PRINTS" id="PR01110">
    <property type="entry name" value="CHEMOKINER5"/>
</dbReference>
<dbReference type="PRINTS" id="PR00237">
    <property type="entry name" value="GPCRRHODOPSN"/>
</dbReference>
<dbReference type="SUPFAM" id="SSF81321">
    <property type="entry name" value="Family A G protein-coupled receptor-like"/>
    <property type="match status" value="1"/>
</dbReference>
<dbReference type="PROSITE" id="PS00237">
    <property type="entry name" value="G_PROTEIN_RECEP_F1_1"/>
    <property type="match status" value="1"/>
</dbReference>
<dbReference type="PROSITE" id="PS50262">
    <property type="entry name" value="G_PROTEIN_RECEP_F1_2"/>
    <property type="match status" value="1"/>
</dbReference>